<feature type="chain" id="PRO_0000276834" description="Large ribosomal subunit protein bL36c">
    <location>
        <begin position="1"/>
        <end position="37"/>
    </location>
</feature>
<evidence type="ECO:0000255" key="1">
    <source>
        <dbReference type="HAMAP-Rule" id="MF_00251"/>
    </source>
</evidence>
<evidence type="ECO:0000305" key="2"/>
<name>RK36_SOLBU</name>
<keyword id="KW-0150">Chloroplast</keyword>
<keyword id="KW-0934">Plastid</keyword>
<keyword id="KW-0687">Ribonucleoprotein</keyword>
<keyword id="KW-0689">Ribosomal protein</keyword>
<comment type="subcellular location">
    <subcellularLocation>
        <location>Plastid</location>
        <location>Chloroplast</location>
    </subcellularLocation>
</comment>
<comment type="similarity">
    <text evidence="1">Belongs to the bacterial ribosomal protein bL36 family.</text>
</comment>
<protein>
    <recommendedName>
        <fullName evidence="1">Large ribosomal subunit protein bL36c</fullName>
    </recommendedName>
    <alternativeName>
        <fullName evidence="2">50S ribosomal protein L36, chloroplastic</fullName>
    </alternativeName>
</protein>
<geneLocation type="chloroplast"/>
<sequence>MKIRASVRKICEKCRLIRRRGRIIVICSNPRHKQRQG</sequence>
<proteinExistence type="inferred from homology"/>
<reference key="1">
    <citation type="journal article" date="2006" name="Theor. Appl. Genet.">
        <title>Complete chloroplast genome sequences of Solanum bulbocastanum, Solanum lycopersicum and comparative analyses with other Solanaceae genomes.</title>
        <authorList>
            <person name="Daniell H."/>
            <person name="Lee S.-B."/>
            <person name="Grevich J."/>
            <person name="Saski C."/>
            <person name="Quesada-Vargas T."/>
            <person name="Guda C."/>
            <person name="Tomkins J."/>
            <person name="Jansen R.K."/>
        </authorList>
    </citation>
    <scope>NUCLEOTIDE SEQUENCE [LARGE SCALE GENOMIC DNA]</scope>
    <source>
        <strain>cv. PT29</strain>
    </source>
</reference>
<accession>Q2MIF4</accession>
<organism>
    <name type="scientific">Solanum bulbocastanum</name>
    <name type="common">Wild potato</name>
    <dbReference type="NCBI Taxonomy" id="147425"/>
    <lineage>
        <taxon>Eukaryota</taxon>
        <taxon>Viridiplantae</taxon>
        <taxon>Streptophyta</taxon>
        <taxon>Embryophyta</taxon>
        <taxon>Tracheophyta</taxon>
        <taxon>Spermatophyta</taxon>
        <taxon>Magnoliopsida</taxon>
        <taxon>eudicotyledons</taxon>
        <taxon>Gunneridae</taxon>
        <taxon>Pentapetalae</taxon>
        <taxon>asterids</taxon>
        <taxon>lamiids</taxon>
        <taxon>Solanales</taxon>
        <taxon>Solanaceae</taxon>
        <taxon>Solanoideae</taxon>
        <taxon>Solaneae</taxon>
        <taxon>Solanum</taxon>
    </lineage>
</organism>
<gene>
    <name evidence="1" type="primary">rpl36</name>
</gene>
<dbReference type="EMBL" id="DQ347958">
    <property type="protein sequence ID" value="ABC56246.1"/>
    <property type="molecule type" value="Genomic_DNA"/>
</dbReference>
<dbReference type="RefSeq" id="YP_538883.1">
    <property type="nucleotide sequence ID" value="NC_007943.1"/>
</dbReference>
<dbReference type="SMR" id="Q2MIF4"/>
<dbReference type="GeneID" id="3989526"/>
<dbReference type="GO" id="GO:0009507">
    <property type="term" value="C:chloroplast"/>
    <property type="evidence" value="ECO:0007669"/>
    <property type="project" value="UniProtKB-SubCell"/>
</dbReference>
<dbReference type="GO" id="GO:1990904">
    <property type="term" value="C:ribonucleoprotein complex"/>
    <property type="evidence" value="ECO:0007669"/>
    <property type="project" value="UniProtKB-KW"/>
</dbReference>
<dbReference type="GO" id="GO:0005840">
    <property type="term" value="C:ribosome"/>
    <property type="evidence" value="ECO:0007669"/>
    <property type="project" value="UniProtKB-KW"/>
</dbReference>
<dbReference type="GO" id="GO:0003735">
    <property type="term" value="F:structural constituent of ribosome"/>
    <property type="evidence" value="ECO:0007669"/>
    <property type="project" value="InterPro"/>
</dbReference>
<dbReference type="GO" id="GO:0006412">
    <property type="term" value="P:translation"/>
    <property type="evidence" value="ECO:0007669"/>
    <property type="project" value="UniProtKB-UniRule"/>
</dbReference>
<dbReference type="HAMAP" id="MF_00251">
    <property type="entry name" value="Ribosomal_bL36"/>
    <property type="match status" value="1"/>
</dbReference>
<dbReference type="InterPro" id="IPR000473">
    <property type="entry name" value="Ribosomal_bL36"/>
</dbReference>
<dbReference type="InterPro" id="IPR035977">
    <property type="entry name" value="Ribosomal_bL36_sp"/>
</dbReference>
<dbReference type="NCBIfam" id="TIGR01022">
    <property type="entry name" value="rpmJ_bact"/>
    <property type="match status" value="1"/>
</dbReference>
<dbReference type="PANTHER" id="PTHR42888">
    <property type="entry name" value="50S RIBOSOMAL PROTEIN L36, CHLOROPLASTIC"/>
    <property type="match status" value="1"/>
</dbReference>
<dbReference type="PANTHER" id="PTHR42888:SF1">
    <property type="entry name" value="LARGE RIBOSOMAL SUBUNIT PROTEIN BL36C"/>
    <property type="match status" value="1"/>
</dbReference>
<dbReference type="Pfam" id="PF00444">
    <property type="entry name" value="Ribosomal_L36"/>
    <property type="match status" value="1"/>
</dbReference>
<dbReference type="SUPFAM" id="SSF57840">
    <property type="entry name" value="Ribosomal protein L36"/>
    <property type="match status" value="1"/>
</dbReference>
<dbReference type="PROSITE" id="PS00828">
    <property type="entry name" value="RIBOSOMAL_L36"/>
    <property type="match status" value="1"/>
</dbReference>